<feature type="chain" id="PRO_0000070643" description="Uncharacterized HTH-type transcriptional regulator HI_0570">
    <location>
        <begin position="1"/>
        <end position="205"/>
    </location>
</feature>
<feature type="domain" description="HTH tetR-type" evidence="1">
    <location>
        <begin position="11"/>
        <end position="71"/>
    </location>
</feature>
<dbReference type="EMBL" id="L42023">
    <property type="protein sequence ID" value="AAC22228.1"/>
    <property type="molecule type" value="Genomic_DNA"/>
</dbReference>
<dbReference type="PIR" id="H64154">
    <property type="entry name" value="H64154"/>
</dbReference>
<dbReference type="RefSeq" id="NP_438727.1">
    <property type="nucleotide sequence ID" value="NC_000907.1"/>
</dbReference>
<dbReference type="SMR" id="P44757"/>
<dbReference type="STRING" id="71421.HI_0570"/>
<dbReference type="EnsemblBacteria" id="AAC22228">
    <property type="protein sequence ID" value="AAC22228"/>
    <property type="gene ID" value="HI_0570"/>
</dbReference>
<dbReference type="KEGG" id="hin:HI_0570"/>
<dbReference type="PATRIC" id="fig|71421.8.peg.590"/>
<dbReference type="eggNOG" id="COG1309">
    <property type="taxonomic scope" value="Bacteria"/>
</dbReference>
<dbReference type="HOGENOM" id="CLU_081861_0_0_6"/>
<dbReference type="OrthoDB" id="8617654at2"/>
<dbReference type="PhylomeDB" id="P44757"/>
<dbReference type="BioCyc" id="HINF71421:G1GJ1-582-MONOMER"/>
<dbReference type="Proteomes" id="UP000000579">
    <property type="component" value="Chromosome"/>
</dbReference>
<dbReference type="GO" id="GO:0003677">
    <property type="term" value="F:DNA binding"/>
    <property type="evidence" value="ECO:0007669"/>
    <property type="project" value="UniProtKB-KW"/>
</dbReference>
<dbReference type="FunFam" id="1.10.10.60:FF:000034">
    <property type="entry name" value="HTH-type transcriptional repressor FabR"/>
    <property type="match status" value="1"/>
</dbReference>
<dbReference type="Gene3D" id="1.10.10.60">
    <property type="entry name" value="Homeodomain-like"/>
    <property type="match status" value="1"/>
</dbReference>
<dbReference type="Gene3D" id="1.10.357.10">
    <property type="entry name" value="Tetracycline Repressor, domain 2"/>
    <property type="match status" value="1"/>
</dbReference>
<dbReference type="InterPro" id="IPR054129">
    <property type="entry name" value="DesT_TetR_C"/>
</dbReference>
<dbReference type="InterPro" id="IPR023772">
    <property type="entry name" value="DNA-bd_HTH_TetR-type_CS"/>
</dbReference>
<dbReference type="InterPro" id="IPR009057">
    <property type="entry name" value="Homeodomain-like_sf"/>
</dbReference>
<dbReference type="InterPro" id="IPR001647">
    <property type="entry name" value="HTH_TetR"/>
</dbReference>
<dbReference type="InterPro" id="IPR050692">
    <property type="entry name" value="HTH_transcr_repressor_FabR"/>
</dbReference>
<dbReference type="NCBIfam" id="NF008402">
    <property type="entry name" value="PRK11202.1"/>
    <property type="match status" value="1"/>
</dbReference>
<dbReference type="PANTHER" id="PTHR47752">
    <property type="entry name" value="HTH-TYPE TRANSCRIPTIONAL REPRESSOR FABR"/>
    <property type="match status" value="1"/>
</dbReference>
<dbReference type="PANTHER" id="PTHR47752:SF1">
    <property type="entry name" value="HTH-TYPE TRANSCRIPTIONAL REPRESSOR FABR"/>
    <property type="match status" value="1"/>
</dbReference>
<dbReference type="Pfam" id="PF21943">
    <property type="entry name" value="TetR_C_46"/>
    <property type="match status" value="1"/>
</dbReference>
<dbReference type="Pfam" id="PF00440">
    <property type="entry name" value="TetR_N"/>
    <property type="match status" value="1"/>
</dbReference>
<dbReference type="SUPFAM" id="SSF46689">
    <property type="entry name" value="Homeodomain-like"/>
    <property type="match status" value="1"/>
</dbReference>
<dbReference type="PROSITE" id="PS01081">
    <property type="entry name" value="HTH_TETR_1"/>
    <property type="match status" value="1"/>
</dbReference>
<dbReference type="PROSITE" id="PS50977">
    <property type="entry name" value="HTH_TETR_2"/>
    <property type="match status" value="1"/>
</dbReference>
<evidence type="ECO:0000255" key="1">
    <source>
        <dbReference type="PROSITE-ProRule" id="PRU00335"/>
    </source>
</evidence>
<accession>P44757</accession>
<keyword id="KW-0238">DNA-binding</keyword>
<keyword id="KW-1185">Reference proteome</keyword>
<keyword id="KW-0804">Transcription</keyword>
<keyword id="KW-0805">Transcription regulation</keyword>
<proteinExistence type="predicted"/>
<sequence>MAGVRAVQKEKTRRALVDAAFNQLSAEKSFSNLSLREVAREAGIAPTSFYRHFSDMDELGLEMVDEAGLMLRQLMRQARKRIDAGGSVISVSVDTFFEFITNSTNVFRLLLRESSGTSQAFRTAAAREIKHFVDELAEYISYKHQYSQYVAYVQAEGIVTIVFTAGANALDMSKAEREQLKARVILQLRMLAKGADFAANKERGK</sequence>
<gene>
    <name type="ordered locus">HI_0570</name>
</gene>
<organism>
    <name type="scientific">Haemophilus influenzae (strain ATCC 51907 / DSM 11121 / KW20 / Rd)</name>
    <dbReference type="NCBI Taxonomy" id="71421"/>
    <lineage>
        <taxon>Bacteria</taxon>
        <taxon>Pseudomonadati</taxon>
        <taxon>Pseudomonadota</taxon>
        <taxon>Gammaproteobacteria</taxon>
        <taxon>Pasteurellales</taxon>
        <taxon>Pasteurellaceae</taxon>
        <taxon>Haemophilus</taxon>
    </lineage>
</organism>
<reference key="1">
    <citation type="journal article" date="1995" name="Science">
        <title>Whole-genome random sequencing and assembly of Haemophilus influenzae Rd.</title>
        <authorList>
            <person name="Fleischmann R.D."/>
            <person name="Adams M.D."/>
            <person name="White O."/>
            <person name="Clayton R.A."/>
            <person name="Kirkness E.F."/>
            <person name="Kerlavage A.R."/>
            <person name="Bult C.J."/>
            <person name="Tomb J.-F."/>
            <person name="Dougherty B.A."/>
            <person name="Merrick J.M."/>
            <person name="McKenney K."/>
            <person name="Sutton G.G."/>
            <person name="FitzHugh W."/>
            <person name="Fields C.A."/>
            <person name="Gocayne J.D."/>
            <person name="Scott J.D."/>
            <person name="Shirley R."/>
            <person name="Liu L.-I."/>
            <person name="Glodek A."/>
            <person name="Kelley J.M."/>
            <person name="Weidman J.F."/>
            <person name="Phillips C.A."/>
            <person name="Spriggs T."/>
            <person name="Hedblom E."/>
            <person name="Cotton M.D."/>
            <person name="Utterback T.R."/>
            <person name="Hanna M.C."/>
            <person name="Nguyen D.T."/>
            <person name="Saudek D.M."/>
            <person name="Brandon R.C."/>
            <person name="Fine L.D."/>
            <person name="Fritchman J.L."/>
            <person name="Fuhrmann J.L."/>
            <person name="Geoghagen N.S.M."/>
            <person name="Gnehm C.L."/>
            <person name="McDonald L.A."/>
            <person name="Small K.V."/>
            <person name="Fraser C.M."/>
            <person name="Smith H.O."/>
            <person name="Venter J.C."/>
        </authorList>
    </citation>
    <scope>NUCLEOTIDE SEQUENCE [LARGE SCALE GENOMIC DNA]</scope>
    <source>
        <strain>ATCC 51907 / DSM 11121 / KW20 / Rd</strain>
    </source>
</reference>
<name>Y570_HAEIN</name>
<protein>
    <recommendedName>
        <fullName>Uncharacterized HTH-type transcriptional regulator HI_0570</fullName>
    </recommendedName>
</protein>